<evidence type="ECO:0000250" key="1"/>
<evidence type="ECO:0000255" key="2"/>
<evidence type="ECO:0000269" key="3">
    <source>
    </source>
</evidence>
<evidence type="ECO:0000269" key="4">
    <source>
    </source>
</evidence>
<evidence type="ECO:0000269" key="5">
    <source>
    </source>
</evidence>
<evidence type="ECO:0000269" key="6">
    <source>
    </source>
</evidence>
<evidence type="ECO:0000305" key="7"/>
<reference key="1">
    <citation type="journal article" date="2003" name="Nat. Immunol.">
        <title>IFN-lambdas mediate antiviral protection through a distinct class II cytokine receptor complex.</title>
        <authorList>
            <person name="Kotenko S.V."/>
            <person name="Gallagher G."/>
            <person name="Baurin V.V."/>
            <person name="Lewis-Antes A."/>
            <person name="Shen M."/>
            <person name="Shah N.K."/>
            <person name="Langer J.A."/>
            <person name="Sheikh F."/>
            <person name="Dickensheets H."/>
            <person name="Donnelly R.P."/>
        </authorList>
    </citation>
    <scope>NUCLEOTIDE SEQUENCE [MRNA]</scope>
    <source>
        <strain>C57BL/6J</strain>
    </source>
</reference>
<reference key="2">
    <citation type="journal article" date="2005" name="J. Gen. Virol.">
        <title>Murine interferon lambdas (type III interferons) exhibit potent antiviral activity in vivo in a poxvirus infection model.</title>
        <authorList>
            <person name="Bartlett N.W."/>
            <person name="Buttigieg K."/>
            <person name="Kotenko S.V."/>
            <person name="Smith G.L."/>
        </authorList>
    </citation>
    <scope>NUCLEOTIDE SEQUENCE [MRNA]</scope>
    <scope>FUNCTION</scope>
    <source>
        <strain>129/Sv</strain>
    </source>
</reference>
<reference key="3">
    <citation type="journal article" date="2006" name="Cancer Res.">
        <title>Characterization of the mouse IFN-lambda ligand-receptor system: IFN-lambdas exhibit antitumor activity against B16 melanoma.</title>
        <authorList>
            <person name="Lasfar A."/>
            <person name="Lewis-Antes A."/>
            <person name="Smirnov S.V."/>
            <person name="Anantha S."/>
            <person name="Abushahba W."/>
            <person name="Tian B."/>
            <person name="Reuhl K."/>
            <person name="Dickensheets H."/>
            <person name="Sheikh F."/>
            <person name="Donnelly R.P."/>
            <person name="Raveche E."/>
            <person name="Kotenko S.V."/>
        </authorList>
    </citation>
    <scope>FUNCTION</scope>
</reference>
<reference key="4">
    <citation type="journal article" date="2008" name="J. Immunol.">
        <title>An important role for type III interferon (IFN-lambda/IL-28) in TLR-induced antiviral activity.</title>
        <authorList>
            <person name="Ank N."/>
            <person name="Iversen M.B."/>
            <person name="Bartholdy C."/>
            <person name="Staeheli P."/>
            <person name="Hartmann R."/>
            <person name="Jensen U.B."/>
            <person name="Dagnaes-Hansen F."/>
            <person name="Thomsen A.R."/>
            <person name="Chen Z."/>
            <person name="Haugen H."/>
            <person name="Klucher K."/>
            <person name="Paludan S.R."/>
        </authorList>
    </citation>
    <scope>FUNCTION</scope>
</reference>
<reference key="5">
    <citation type="journal article" date="2010" name="J. Interferon Cytokine Res.">
        <title>Interferon-lambda: a new addition to an old family.</title>
        <authorList>
            <person name="Donnelly R.P."/>
            <person name="Kotenko S.V."/>
        </authorList>
    </citation>
    <scope>REVIEW</scope>
</reference>
<reference key="6">
    <citation type="journal article" date="2011" name="Proc. Natl. Acad. Sci. U.S.A.">
        <title>IFN-lambda determines the intestinal epithelial antiviral host defense.</title>
        <authorList>
            <person name="Pott J."/>
            <person name="Mahlakoiv T."/>
            <person name="Mordstein M."/>
            <person name="Duerr C.U."/>
            <person name="Michiels T."/>
            <person name="Stockinger S."/>
            <person name="Staeheli P."/>
            <person name="Hornef M.W."/>
        </authorList>
    </citation>
    <scope>FUNCTION</scope>
</reference>
<reference key="7">
    <citation type="journal article" date="2014" name="J. Innate Immun.">
        <title>Interferon-lambda in the context of viral infections: production, response and therapeutic implications.</title>
        <authorList>
            <person name="Hermant P."/>
            <person name="Michiels T."/>
        </authorList>
    </citation>
    <scope>REVIEW</scope>
</reference>
<sequence length="193" mass="21664">MLLLLLPLLLAAVLTRTQADPVPRATRLPVEAKDCHIAQFKSLSPKELQAFKKAKGAIEKRLLEKDMRCSSHLISRAWDLKQLQVQERPKALQAEVALTLKVWENINDSALTTILGQPLHTLSHIHSQLQTCTQLQATAEPKPPSRRLSRWLHRLQEAQSKETPGCLEDSVTSNLFQLLLRDLKCVASGDQCV</sequence>
<comment type="function">
    <text evidence="3 4 5 6">Cytokine with antiviral, antitumour and immunomodulatory activities. Plays a critical role in the antiviral host defense, predominantly in the epithelial tissues. Acts as a ligand for the heterodimeric class II cytokine receptor composed of IL10RB and IFNLR1, and receptor engagement leads to the activation of the JAK/STAT signaling pathway resulting in the expression of IFN-stimulated genes (ISG), which mediate the antiviral state. Has a restricted receptor distribution and therefore restricted targets: is primarily active in epithelial cells and this cell type-selective action is because of the epithelial cell-specific expression of its receptor IFNLR1. Seems not to be essential for early virus-activated host defense in vaginal infection, but plays an important role in Toll-like receptor (TLR)-induced antiviral defense. Plays a significant role in the antiviral immune defense in the intestinal epithelium. Exerts an immunomodulatory effect by up-regulating MHC class I antigen expression.</text>
</comment>
<comment type="subcellular location">
    <subcellularLocation>
        <location evidence="1">Secreted</location>
    </subcellularLocation>
</comment>
<comment type="similarity">
    <text evidence="7">Belongs to the lambda interferon family.</text>
</comment>
<gene>
    <name type="primary">Ifnl3</name>
    <name type="synonym">Il28</name>
    <name type="synonym">Il28b</name>
</gene>
<name>IFNL3_MOUSE</name>
<feature type="signal peptide" evidence="2">
    <location>
        <begin position="1"/>
        <end position="19"/>
    </location>
</feature>
<feature type="chain" id="PRO_0000015512" description="Interferon lambda-3">
    <location>
        <begin position="20"/>
        <end position="193"/>
    </location>
</feature>
<feature type="disulfide bond" evidence="1">
    <location>
        <begin position="35"/>
        <end position="132"/>
    </location>
</feature>
<feature type="disulfide bond" evidence="1">
    <location>
        <begin position="69"/>
        <end position="166"/>
    </location>
</feature>
<feature type="disulfide bond" evidence="1">
    <location>
        <begin position="185"/>
        <end position="192"/>
    </location>
</feature>
<feature type="sequence conflict" description="In Ref. 2; AAX58715." evidence="7" ref="2">
    <original>G</original>
    <variation>D</variation>
    <location>
        <position position="56"/>
    </location>
</feature>
<feature type="sequence conflict" description="In Ref. 2; AAX58715." evidence="7" ref="2">
    <original>M</original>
    <variation>V</variation>
    <location>
        <position position="67"/>
    </location>
</feature>
<proteinExistence type="evidence at transcript level"/>
<dbReference type="EMBL" id="AY184375">
    <property type="protein sequence ID" value="AAN86128.1"/>
    <property type="molecule type" value="mRNA"/>
</dbReference>
<dbReference type="EMBL" id="AY869696">
    <property type="protein sequence ID" value="AAX58715.1"/>
    <property type="molecule type" value="mRNA"/>
</dbReference>
<dbReference type="CCDS" id="CCDS21047.1"/>
<dbReference type="RefSeq" id="NP_796370.1">
    <property type="nucleotide sequence ID" value="NM_177396.1"/>
</dbReference>
<dbReference type="SMR" id="Q8CGK6"/>
<dbReference type="FunCoup" id="Q8CGK6">
    <property type="interactions" value="355"/>
</dbReference>
<dbReference type="STRING" id="10090.ENSMUSP00000077473"/>
<dbReference type="PhosphoSitePlus" id="Q8CGK6"/>
<dbReference type="PaxDb" id="10090-ENSMUSP00000077473"/>
<dbReference type="DNASU" id="338374"/>
<dbReference type="Ensembl" id="ENSMUST00000078364.4">
    <property type="protein sequence ID" value="ENSMUSP00000077473.4"/>
    <property type="gene ID" value="ENSMUSG00000060747.4"/>
</dbReference>
<dbReference type="GeneID" id="338374"/>
<dbReference type="KEGG" id="mmu:338374"/>
<dbReference type="UCSC" id="uc009fze.1">
    <property type="organism name" value="mouse"/>
</dbReference>
<dbReference type="AGR" id="MGI:2450574"/>
<dbReference type="CTD" id="282617"/>
<dbReference type="MGI" id="MGI:2450574">
    <property type="gene designation" value="Ifnl3"/>
</dbReference>
<dbReference type="VEuPathDB" id="HostDB:ENSMUSG00000060747"/>
<dbReference type="eggNOG" id="ENOG502SSDC">
    <property type="taxonomic scope" value="Eukaryota"/>
</dbReference>
<dbReference type="GeneTree" id="ENSGT00390000014310"/>
<dbReference type="HOGENOM" id="CLU_120266_0_0_1"/>
<dbReference type="InParanoid" id="Q8CGK6"/>
<dbReference type="OMA" id="KAWSCRP"/>
<dbReference type="OrthoDB" id="9897984at2759"/>
<dbReference type="PhylomeDB" id="Q8CGK6"/>
<dbReference type="TreeFam" id="TF336172"/>
<dbReference type="Reactome" id="R-MMU-8854691">
    <property type="pathway name" value="Interleukin-20 family signaling"/>
</dbReference>
<dbReference type="BioGRID-ORCS" id="338374">
    <property type="hits" value="0 hits in 75 CRISPR screens"/>
</dbReference>
<dbReference type="ChiTaRS" id="Ifnl3">
    <property type="organism name" value="mouse"/>
</dbReference>
<dbReference type="PRO" id="PR:Q8CGK6"/>
<dbReference type="Proteomes" id="UP000000589">
    <property type="component" value="Chromosome 7"/>
</dbReference>
<dbReference type="RNAct" id="Q8CGK6">
    <property type="molecule type" value="protein"/>
</dbReference>
<dbReference type="Bgee" id="ENSMUSG00000060747">
    <property type="expression patterns" value="Expressed in thymus and 1 other cell type or tissue"/>
</dbReference>
<dbReference type="GO" id="GO:0005615">
    <property type="term" value="C:extracellular space"/>
    <property type="evidence" value="ECO:0000314"/>
    <property type="project" value="MGI"/>
</dbReference>
<dbReference type="GO" id="GO:0005125">
    <property type="term" value="F:cytokine activity"/>
    <property type="evidence" value="ECO:0007669"/>
    <property type="project" value="UniProtKB-KW"/>
</dbReference>
<dbReference type="GO" id="GO:0005102">
    <property type="term" value="F:signaling receptor binding"/>
    <property type="evidence" value="ECO:0000247"/>
    <property type="project" value="MGI"/>
</dbReference>
<dbReference type="GO" id="GO:0007259">
    <property type="term" value="P:cell surface receptor signaling pathway via JAK-STAT"/>
    <property type="evidence" value="ECO:0007669"/>
    <property type="project" value="InterPro"/>
</dbReference>
<dbReference type="GO" id="GO:0051607">
    <property type="term" value="P:defense response to virus"/>
    <property type="evidence" value="ECO:0000250"/>
    <property type="project" value="UniProtKB"/>
</dbReference>
<dbReference type="GO" id="GO:0045087">
    <property type="term" value="P:innate immune response"/>
    <property type="evidence" value="ECO:0000314"/>
    <property type="project" value="MGI"/>
</dbReference>
<dbReference type="GO" id="GO:0045071">
    <property type="term" value="P:negative regulation of viral genome replication"/>
    <property type="evidence" value="ECO:0000250"/>
    <property type="project" value="UniProtKB"/>
</dbReference>
<dbReference type="GO" id="GO:0050778">
    <property type="term" value="P:positive regulation of immune response"/>
    <property type="evidence" value="ECO:0007669"/>
    <property type="project" value="InterPro"/>
</dbReference>
<dbReference type="FunFam" id="1.20.1250.60:FF:000001">
    <property type="entry name" value="Interferon lambda 1"/>
    <property type="match status" value="1"/>
</dbReference>
<dbReference type="Gene3D" id="1.20.1250.60">
    <property type="entry name" value="Interferon lambda"/>
    <property type="match status" value="1"/>
</dbReference>
<dbReference type="InterPro" id="IPR038326">
    <property type="entry name" value="IFN-lambda_sf"/>
</dbReference>
<dbReference type="InterPro" id="IPR029177">
    <property type="entry name" value="INF_lambda"/>
</dbReference>
<dbReference type="PANTHER" id="PTHR31943:SF1">
    <property type="entry name" value="INTERFERON LAMBDA-2-RELATED"/>
    <property type="match status" value="1"/>
</dbReference>
<dbReference type="PANTHER" id="PTHR31943">
    <property type="entry name" value="INTERLEUKIN-28 AND 29"/>
    <property type="match status" value="1"/>
</dbReference>
<dbReference type="Pfam" id="PF15177">
    <property type="entry name" value="IL28A"/>
    <property type="match status" value="1"/>
</dbReference>
<accession>Q8CGK6</accession>
<accession>Q4VK73</accession>
<keyword id="KW-0051">Antiviral defense</keyword>
<keyword id="KW-0202">Cytokine</keyword>
<keyword id="KW-1015">Disulfide bond</keyword>
<keyword id="KW-1185">Reference proteome</keyword>
<keyword id="KW-0964">Secreted</keyword>
<keyword id="KW-0732">Signal</keyword>
<organism>
    <name type="scientific">Mus musculus</name>
    <name type="common">Mouse</name>
    <dbReference type="NCBI Taxonomy" id="10090"/>
    <lineage>
        <taxon>Eukaryota</taxon>
        <taxon>Metazoa</taxon>
        <taxon>Chordata</taxon>
        <taxon>Craniata</taxon>
        <taxon>Vertebrata</taxon>
        <taxon>Euteleostomi</taxon>
        <taxon>Mammalia</taxon>
        <taxon>Eutheria</taxon>
        <taxon>Euarchontoglires</taxon>
        <taxon>Glires</taxon>
        <taxon>Rodentia</taxon>
        <taxon>Myomorpha</taxon>
        <taxon>Muroidea</taxon>
        <taxon>Muridae</taxon>
        <taxon>Murinae</taxon>
        <taxon>Mus</taxon>
        <taxon>Mus</taxon>
    </lineage>
</organism>
<protein>
    <recommendedName>
        <fullName>Interferon lambda-3</fullName>
        <shortName>IFN-lambda-3</shortName>
    </recommendedName>
    <alternativeName>
        <fullName>Interleukin-28B</fullName>
        <shortName>IL-28B</shortName>
    </alternativeName>
</protein>